<dbReference type="EMBL" id="L42023">
    <property type="protein sequence ID" value="AAC21723.1"/>
    <property type="molecule type" value="Genomic_DNA"/>
</dbReference>
<dbReference type="PIR" id="B64141">
    <property type="entry name" value="B64141"/>
</dbReference>
<dbReference type="RefSeq" id="NP_438218.1">
    <property type="nucleotide sequence ID" value="NC_000907.1"/>
</dbReference>
<dbReference type="STRING" id="71421.HI_0045"/>
<dbReference type="EnsemblBacteria" id="AAC21723">
    <property type="protein sequence ID" value="AAC21723"/>
    <property type="gene ID" value="HI_0045"/>
</dbReference>
<dbReference type="KEGG" id="hin:HI_0045"/>
<dbReference type="PATRIC" id="fig|71421.8.peg.45"/>
<dbReference type="eggNOG" id="COG3054">
    <property type="taxonomic scope" value="Bacteria"/>
</dbReference>
<dbReference type="HOGENOM" id="CLU_091011_0_0_6"/>
<dbReference type="OrthoDB" id="5689995at2"/>
<dbReference type="PhylomeDB" id="P44478"/>
<dbReference type="BioCyc" id="HINF71421:G1GJ1-46-MONOMER"/>
<dbReference type="Proteomes" id="UP000000579">
    <property type="component" value="Chromosome"/>
</dbReference>
<dbReference type="GO" id="GO:0042597">
    <property type="term" value="C:periplasmic space"/>
    <property type="evidence" value="ECO:0007669"/>
    <property type="project" value="UniProtKB-SubCell"/>
</dbReference>
<dbReference type="InterPro" id="IPR006513">
    <property type="entry name" value="YtfJ_HI0045"/>
</dbReference>
<dbReference type="NCBIfam" id="TIGR01626">
    <property type="entry name" value="ytfJ_HI0045"/>
    <property type="match status" value="1"/>
</dbReference>
<dbReference type="Pfam" id="PF09695">
    <property type="entry name" value="YtfJ_HI0045"/>
    <property type="match status" value="1"/>
</dbReference>
<sequence>MKKQILALVCGVIFSSSTWAHNLQLEQSLPSVKVSEYGEIVLSGKDTVFQPWGSAELAGKVRVVHHLAGRTAAKEXNQSMIDVIKASHFNPVKYQTTTIINADDAIVGTGMFVKNGAKKGKQENPHSQVVLDDKSAVKNAWGLNSKDSAIIVLDKTGKVKFVKEGKLSDSDIQTVISLVNGLTK</sequence>
<gene>
    <name type="ordered locus">HI_0045</name>
</gene>
<keyword id="KW-0574">Periplasm</keyword>
<keyword id="KW-1185">Reference proteome</keyword>
<keyword id="KW-0732">Signal</keyword>
<protein>
    <recommendedName>
        <fullName>Uncharacterized protein HI_0045</fullName>
    </recommendedName>
</protein>
<reference key="1">
    <citation type="journal article" date="1995" name="Science">
        <title>Whole-genome random sequencing and assembly of Haemophilus influenzae Rd.</title>
        <authorList>
            <person name="Fleischmann R.D."/>
            <person name="Adams M.D."/>
            <person name="White O."/>
            <person name="Clayton R.A."/>
            <person name="Kirkness E.F."/>
            <person name="Kerlavage A.R."/>
            <person name="Bult C.J."/>
            <person name="Tomb J.-F."/>
            <person name="Dougherty B.A."/>
            <person name="Merrick J.M."/>
            <person name="McKenney K."/>
            <person name="Sutton G.G."/>
            <person name="FitzHugh W."/>
            <person name="Fields C.A."/>
            <person name="Gocayne J.D."/>
            <person name="Scott J.D."/>
            <person name="Shirley R."/>
            <person name="Liu L.-I."/>
            <person name="Glodek A."/>
            <person name="Kelley J.M."/>
            <person name="Weidman J.F."/>
            <person name="Phillips C.A."/>
            <person name="Spriggs T."/>
            <person name="Hedblom E."/>
            <person name="Cotton M.D."/>
            <person name="Utterback T.R."/>
            <person name="Hanna M.C."/>
            <person name="Nguyen D.T."/>
            <person name="Saudek D.M."/>
            <person name="Brandon R.C."/>
            <person name="Fine L.D."/>
            <person name="Fritchman J.L."/>
            <person name="Fuhrmann J.L."/>
            <person name="Geoghagen N.S.M."/>
            <person name="Gnehm C.L."/>
            <person name="McDonald L.A."/>
            <person name="Small K.V."/>
            <person name="Fraser C.M."/>
            <person name="Smith H.O."/>
            <person name="Venter J.C."/>
        </authorList>
    </citation>
    <scope>NUCLEOTIDE SEQUENCE [LARGE SCALE GENOMIC DNA]</scope>
    <source>
        <strain>ATCC 51907 / DSM 11121 / KW20 / Rd</strain>
    </source>
</reference>
<organism>
    <name type="scientific">Haemophilus influenzae (strain ATCC 51907 / DSM 11121 / KW20 / Rd)</name>
    <dbReference type="NCBI Taxonomy" id="71421"/>
    <lineage>
        <taxon>Bacteria</taxon>
        <taxon>Pseudomonadati</taxon>
        <taxon>Pseudomonadota</taxon>
        <taxon>Gammaproteobacteria</taxon>
        <taxon>Pasteurellales</taxon>
        <taxon>Pasteurellaceae</taxon>
        <taxon>Haemophilus</taxon>
    </lineage>
</organism>
<evidence type="ECO:0000255" key="1"/>
<evidence type="ECO:0000305" key="2"/>
<comment type="subcellular location">
    <subcellularLocation>
        <location evidence="2">Periplasm</location>
    </subcellularLocation>
</comment>
<comment type="similarity">
    <text evidence="2">To E.coli YtfJ.</text>
</comment>
<name>Y045_HAEIN</name>
<proteinExistence type="inferred from homology"/>
<feature type="signal peptide" evidence="1">
    <location>
        <begin position="1"/>
        <end position="20"/>
    </location>
</feature>
<feature type="chain" id="PRO_0000013945" description="Uncharacterized protein HI_0045">
    <location>
        <begin position="21"/>
        <end position="184"/>
    </location>
</feature>
<accession>P44478</accession>